<feature type="chain" id="PRO_0000338601" description="Solute carrier family 15 member 4">
    <location>
        <begin position="1"/>
        <end position="572"/>
    </location>
</feature>
<feature type="transmembrane region" description="Helical" evidence="3">
    <location>
        <begin position="40"/>
        <end position="60"/>
    </location>
</feature>
<feature type="transmembrane region" description="Helical" evidence="3">
    <location>
        <begin position="67"/>
        <end position="87"/>
    </location>
</feature>
<feature type="transmembrane region" description="Helical" evidence="3">
    <location>
        <begin position="96"/>
        <end position="116"/>
    </location>
</feature>
<feature type="transmembrane region" description="Helical" evidence="3">
    <location>
        <begin position="159"/>
        <end position="179"/>
    </location>
</feature>
<feature type="transmembrane region" description="Helical" evidence="3">
    <location>
        <begin position="195"/>
        <end position="215"/>
    </location>
</feature>
<feature type="transmembrane region" description="Helical" evidence="3">
    <location>
        <begin position="223"/>
        <end position="243"/>
    </location>
</feature>
<feature type="transmembrane region" description="Helical" evidence="3">
    <location>
        <begin position="317"/>
        <end position="337"/>
    </location>
</feature>
<feature type="transmembrane region" description="Helical" evidence="3">
    <location>
        <begin position="362"/>
        <end position="382"/>
    </location>
</feature>
<feature type="transmembrane region" description="Helical" evidence="3">
    <location>
        <begin position="404"/>
        <end position="424"/>
    </location>
</feature>
<feature type="transmembrane region" description="Helical" evidence="3">
    <location>
        <begin position="458"/>
        <end position="478"/>
    </location>
</feature>
<feature type="transmembrane region" description="Helical" evidence="3">
    <location>
        <begin position="489"/>
        <end position="509"/>
    </location>
</feature>
<feature type="transmembrane region" description="Helical" evidence="3">
    <location>
        <begin position="534"/>
        <end position="554"/>
    </location>
</feature>
<feature type="modified residue" description="Phosphoserine" evidence="2">
    <location>
        <position position="279"/>
    </location>
</feature>
<feature type="modified residue" description="Phosphoserine" evidence="1">
    <location>
        <position position="297"/>
    </location>
</feature>
<feature type="sequence conflict" description="In Ref. 2; AAH87709." evidence="7" ref="2">
    <original>R</original>
    <variation>H</variation>
    <location>
        <position position="302"/>
    </location>
</feature>
<feature type="sequence conflict" description="In Ref. 2; AAH87709." evidence="7" ref="2">
    <original>T</original>
    <variation>I</variation>
    <location>
        <position position="307"/>
    </location>
</feature>
<organism>
    <name type="scientific">Rattus norvegicus</name>
    <name type="common">Rat</name>
    <dbReference type="NCBI Taxonomy" id="10116"/>
    <lineage>
        <taxon>Eukaryota</taxon>
        <taxon>Metazoa</taxon>
        <taxon>Chordata</taxon>
        <taxon>Craniata</taxon>
        <taxon>Vertebrata</taxon>
        <taxon>Euteleostomi</taxon>
        <taxon>Mammalia</taxon>
        <taxon>Eutheria</taxon>
        <taxon>Euarchontoglires</taxon>
        <taxon>Glires</taxon>
        <taxon>Rodentia</taxon>
        <taxon>Myomorpha</taxon>
        <taxon>Muroidea</taxon>
        <taxon>Muridae</taxon>
        <taxon>Murinae</taxon>
        <taxon>Rattus</taxon>
    </lineage>
</organism>
<proteinExistence type="evidence at protein level"/>
<dbReference type="EMBL" id="AB000280">
    <property type="protein sequence ID" value="BAA20489.1"/>
    <property type="molecule type" value="mRNA"/>
</dbReference>
<dbReference type="EMBL" id="BC087709">
    <property type="protein sequence ID" value="AAH87709.1"/>
    <property type="molecule type" value="mRNA"/>
</dbReference>
<dbReference type="RefSeq" id="NP_653359.1">
    <property type="nucleotide sequence ID" value="NM_144758.1"/>
</dbReference>
<dbReference type="SMR" id="O09014"/>
<dbReference type="FunCoup" id="O09014">
    <property type="interactions" value="2405"/>
</dbReference>
<dbReference type="STRING" id="10116.ENSRNOP00000001277"/>
<dbReference type="PhosphoSitePlus" id="O09014"/>
<dbReference type="jPOST" id="O09014"/>
<dbReference type="PaxDb" id="10116-ENSRNOP00000001277"/>
<dbReference type="GeneID" id="246280"/>
<dbReference type="KEGG" id="rno:246280"/>
<dbReference type="UCSC" id="RGD:708469">
    <property type="organism name" value="rat"/>
</dbReference>
<dbReference type="AGR" id="RGD:708469"/>
<dbReference type="CTD" id="121260"/>
<dbReference type="RGD" id="708469">
    <property type="gene designation" value="Slc15a4"/>
</dbReference>
<dbReference type="eggNOG" id="KOG1237">
    <property type="taxonomic scope" value="Eukaryota"/>
</dbReference>
<dbReference type="InParanoid" id="O09014"/>
<dbReference type="OrthoDB" id="8904098at2759"/>
<dbReference type="PhylomeDB" id="O09014"/>
<dbReference type="TreeFam" id="TF330897"/>
<dbReference type="Reactome" id="R-RNO-427975">
    <property type="pathway name" value="Proton/oligopeptide cotransporters"/>
</dbReference>
<dbReference type="Reactome" id="R-RNO-6798695">
    <property type="pathway name" value="Neutrophil degranulation"/>
</dbReference>
<dbReference type="Reactome" id="R-RNO-9860276">
    <property type="pathway name" value="SLC15A4:TASL-dependent IRF5 activation"/>
</dbReference>
<dbReference type="PRO" id="PR:O09014"/>
<dbReference type="Proteomes" id="UP000002494">
    <property type="component" value="Unplaced"/>
</dbReference>
<dbReference type="GO" id="GO:0031901">
    <property type="term" value="C:early endosome membrane"/>
    <property type="evidence" value="ECO:0000266"/>
    <property type="project" value="RGD"/>
</dbReference>
<dbReference type="GO" id="GO:0036020">
    <property type="term" value="C:endolysosome membrane"/>
    <property type="evidence" value="ECO:0000250"/>
    <property type="project" value="UniProtKB"/>
</dbReference>
<dbReference type="GO" id="GO:0010008">
    <property type="term" value="C:endosome membrane"/>
    <property type="evidence" value="ECO:0000266"/>
    <property type="project" value="RGD"/>
</dbReference>
<dbReference type="GO" id="GO:0005765">
    <property type="term" value="C:lysosomal membrane"/>
    <property type="evidence" value="ECO:0000250"/>
    <property type="project" value="UniProtKB"/>
</dbReference>
<dbReference type="GO" id="GO:0016020">
    <property type="term" value="C:membrane"/>
    <property type="evidence" value="ECO:0000318"/>
    <property type="project" value="GO_Central"/>
</dbReference>
<dbReference type="GO" id="GO:0071916">
    <property type="term" value="F:dipeptide transmembrane transporter activity"/>
    <property type="evidence" value="ECO:0000250"/>
    <property type="project" value="UniProtKB"/>
</dbReference>
<dbReference type="GO" id="GO:0005290">
    <property type="term" value="F:L-histidine transmembrane transporter activity"/>
    <property type="evidence" value="ECO:0000315"/>
    <property type="project" value="RGD"/>
</dbReference>
<dbReference type="GO" id="GO:0015333">
    <property type="term" value="F:peptide:proton symporter activity"/>
    <property type="evidence" value="ECO:0000250"/>
    <property type="project" value="UniProtKB"/>
</dbReference>
<dbReference type="GO" id="GO:0015647">
    <property type="term" value="F:peptidoglycan transmembrane transporter activity"/>
    <property type="evidence" value="ECO:0000250"/>
    <property type="project" value="UniProtKB"/>
</dbReference>
<dbReference type="GO" id="GO:0140206">
    <property type="term" value="P:dipeptide import across plasma membrane"/>
    <property type="evidence" value="ECO:0000250"/>
    <property type="project" value="UniProtKB"/>
</dbReference>
<dbReference type="GO" id="GO:0015817">
    <property type="term" value="P:histidine transport"/>
    <property type="evidence" value="ECO:0000315"/>
    <property type="project" value="RGD"/>
</dbReference>
<dbReference type="GO" id="GO:0045087">
    <property type="term" value="P:innate immune response"/>
    <property type="evidence" value="ECO:0007669"/>
    <property type="project" value="UniProtKB-KW"/>
</dbReference>
<dbReference type="GO" id="GO:0089708">
    <property type="term" value="P:L-histidine transmembrane export from vacuole"/>
    <property type="evidence" value="ECO:0000266"/>
    <property type="project" value="RGD"/>
</dbReference>
<dbReference type="GO" id="GO:0033023">
    <property type="term" value="P:mast cell homeostasis"/>
    <property type="evidence" value="ECO:0000250"/>
    <property type="project" value="UniProtKB"/>
</dbReference>
<dbReference type="GO" id="GO:0015835">
    <property type="term" value="P:peptidoglycan transport"/>
    <property type="evidence" value="ECO:0000250"/>
    <property type="project" value="UniProtKB"/>
</dbReference>
<dbReference type="GO" id="GO:0045089">
    <property type="term" value="P:positive regulation of innate immune response"/>
    <property type="evidence" value="ECO:0000250"/>
    <property type="project" value="UniProtKB"/>
</dbReference>
<dbReference type="GO" id="GO:0070430">
    <property type="term" value="P:positive regulation of nucleotide-binding oligomerization domain containing 1 signaling pathway"/>
    <property type="evidence" value="ECO:0000250"/>
    <property type="project" value="UniProtKB"/>
</dbReference>
<dbReference type="GO" id="GO:0070434">
    <property type="term" value="P:positive regulation of nucleotide-binding oligomerization domain containing 2 signaling pathway"/>
    <property type="evidence" value="ECO:0000250"/>
    <property type="project" value="UniProtKB"/>
</dbReference>
<dbReference type="GO" id="GO:0034157">
    <property type="term" value="P:positive regulation of toll-like receptor 7 signaling pathway"/>
    <property type="evidence" value="ECO:0000250"/>
    <property type="project" value="UniProtKB"/>
</dbReference>
<dbReference type="GO" id="GO:0034161">
    <property type="term" value="P:positive regulation of toll-like receptor 8 signaling pathway"/>
    <property type="evidence" value="ECO:0000250"/>
    <property type="project" value="UniProtKB"/>
</dbReference>
<dbReference type="GO" id="GO:0034165">
    <property type="term" value="P:positive regulation of toll-like receptor 9 signaling pathway"/>
    <property type="evidence" value="ECO:0000250"/>
    <property type="project" value="UniProtKB"/>
</dbReference>
<dbReference type="GO" id="GO:0015031">
    <property type="term" value="P:protein transport"/>
    <property type="evidence" value="ECO:0007669"/>
    <property type="project" value="UniProtKB-KW"/>
</dbReference>
<dbReference type="GO" id="GO:0048302">
    <property type="term" value="P:regulation of isotype switching to IgG isotypes"/>
    <property type="evidence" value="ECO:0000250"/>
    <property type="project" value="UniProtKB"/>
</dbReference>
<dbReference type="GO" id="GO:0070424">
    <property type="term" value="P:regulation of nucleotide-binding domain, leucine rich repeat containing receptor signaling pathway"/>
    <property type="evidence" value="ECO:0000250"/>
    <property type="project" value="UniProtKB"/>
</dbReference>
<dbReference type="CDD" id="cd17348">
    <property type="entry name" value="MFS_SLC15A3_4"/>
    <property type="match status" value="1"/>
</dbReference>
<dbReference type="FunFam" id="1.20.1250.20:FF:000212">
    <property type="entry name" value="Solute carrier family 15 member 4"/>
    <property type="match status" value="1"/>
</dbReference>
<dbReference type="Gene3D" id="1.20.1250.20">
    <property type="entry name" value="MFS general substrate transporter like domains"/>
    <property type="match status" value="1"/>
</dbReference>
<dbReference type="InterPro" id="IPR036259">
    <property type="entry name" value="MFS_trans_sf"/>
</dbReference>
<dbReference type="InterPro" id="IPR000109">
    <property type="entry name" value="POT_fam"/>
</dbReference>
<dbReference type="InterPro" id="IPR018456">
    <property type="entry name" value="PTR2_symporter_CS"/>
</dbReference>
<dbReference type="PANTHER" id="PTHR11654">
    <property type="entry name" value="OLIGOPEPTIDE TRANSPORTER-RELATED"/>
    <property type="match status" value="1"/>
</dbReference>
<dbReference type="Pfam" id="PF00854">
    <property type="entry name" value="PTR2"/>
    <property type="match status" value="1"/>
</dbReference>
<dbReference type="SUPFAM" id="SSF103473">
    <property type="entry name" value="MFS general substrate transporter"/>
    <property type="match status" value="1"/>
</dbReference>
<dbReference type="PROSITE" id="PS01023">
    <property type="entry name" value="PTR2_2"/>
    <property type="match status" value="1"/>
</dbReference>
<sequence length="572" mass="61949">MEGERAPLLGSRRAAAAAGVFAGRRAACGAVLLAELLERAAFYGVTANLVLFLNGAPFNWEGAQASQALLLFMGLTYLGSPFGGWLADARLGRARAILLSLALYLLGMLAFPLLAAPRSRSFLCGDPHPELVRNCSAPFPNGTAVCPDAAARRCAPATFAGLVLVGLGVATVKANITPFGADQVKDRGPEATRRFFNWFYWSINLGAILSLGGIAYIQQNVSFLTGYLIPTVCVAIAFLVFLCGQSVFITKPPDGSAFTDMFRILTYSCCSQRGGQRRSGEGLGVFQQSSKHSLFDSCKMSRGGPFTEDKVEDVKALVKIVPVFLALIPYWTVYFQMQTTYVLQSLHLKIPEISSITTTHHTLPAAWLTMFDAVLILLLIPLKDKLVDPVLRRHGLLPSSLKRIAVGMFFVTCSAFAAGILESKRLDLVKEKTINQTIGGVVYHAADLPIWWQIPQYVLIGISEIFASIAGLEFAYSAAPKSMQSAIMGLFFFFSGIGSFVGSGLLALVSLKAIGWMSSHTDFGNINSCHLHYYFFLLAAIQGATLLLFLIVSVKYDRQRARTDGGTASTRT</sequence>
<protein>
    <recommendedName>
        <fullName evidence="7">Solute carrier family 15 member 4</fullName>
    </recommendedName>
    <alternativeName>
        <fullName evidence="6">Peptide/histidine transporter 1</fullName>
        <shortName evidence="6">rPHT1</shortName>
    </alternativeName>
</protein>
<name>S15A4_RAT</name>
<comment type="function">
    <text evidence="1 2 5">Proton-coupled amino-acid transporter that mediates the transmembrane transport of L-histidine and some di- and tripeptides from inside the lysosome to the cytosol, and plays a key role in innate immune response (PubMed:9092568). Able to transport a variety of di- and tripeptides, including carnosine and some peptidoglycans (By similarity). Transporter activity is pH-dependent and maximized in the acidic lysosomal environment (PubMed:9092568). Involved in the detection of microbial pathogens by toll-like receptors (TLRs) and NOD-like receptors (NLRs), probably by mediating transport of bacterial peptidoglycans across the endolysosomal membrane: catalyzes the transport of certain bacterial peptidoglycans, such as muramyl dipeptide (MDP), the NOD2 ligand, and L-alanyl-gamma-D-glutamyl-meso-2,6-diaminoheptanedioate (tri-DAP), the NOD1 ligand. Required for TLR7, TLR8 and TLR9-mediated type I interferon (IFN-I) productions in plasmacytoid dendritic cells (pDCs). Independently of its transporter activity, also promotes the recruitment of innate immune adapter TASL to endolysosome downstream of TLR7, TLR8 and TLR9: TASL recruitment leads to the specific recruitment and activation of IRF5 (By similarity). Required for isotype class switch recombination to IgG2c isotype in response to TLR9 stimulation. Required for mast cell secretory-granule homeostasis by limiting mast cell functions and inflammatory responses (By similarity).</text>
</comment>
<comment type="catalytic activity">
    <reaction evidence="5">
        <text>L-histidine(out) + n H(+)(out) = L-histidine(in) + n H(+)(in)</text>
        <dbReference type="Rhea" id="RHEA:76379"/>
        <dbReference type="ChEBI" id="CHEBI:15378"/>
        <dbReference type="ChEBI" id="CHEBI:57595"/>
    </reaction>
    <physiologicalReaction direction="left-to-right" evidence="8">
        <dbReference type="Rhea" id="RHEA:76380"/>
    </physiologicalReaction>
</comment>
<comment type="catalytic activity">
    <reaction evidence="1">
        <text>L-alanyl-gamma-D-glutamyl-meso-2,6-diaminopimelate(out) + n H(+)(out) = L-alanyl-gamma-D-glutamyl-meso-2,6-diaminopimelate(in) + n H(+)(in)</text>
        <dbReference type="Rhea" id="RHEA:64412"/>
        <dbReference type="ChEBI" id="CHEBI:15378"/>
        <dbReference type="ChEBI" id="CHEBI:61401"/>
    </reaction>
    <physiologicalReaction direction="left-to-right" evidence="1">
        <dbReference type="Rhea" id="RHEA:64413"/>
    </physiologicalReaction>
</comment>
<comment type="catalytic activity">
    <reaction evidence="1">
        <text>glycylglycylglycine(out) + n H(+)(out) = glycylglycylglycine(in) + n H(+)(in)</text>
        <dbReference type="Rhea" id="RHEA:76391"/>
        <dbReference type="ChEBI" id="CHEBI:15378"/>
        <dbReference type="ChEBI" id="CHEBI:195214"/>
    </reaction>
    <physiologicalReaction direction="left-to-right" evidence="1">
        <dbReference type="Rhea" id="RHEA:76392"/>
    </physiologicalReaction>
</comment>
<comment type="catalytic activity">
    <reaction evidence="1">
        <text>N-acetyl-D-muramoyl-L-alanyl-D-isoglutamine(out) + n H(+)(out) = N-acetyl-D-muramoyl-L-alanyl-D-isoglutamine(in) + n H(+)(in)</text>
        <dbReference type="Rhea" id="RHEA:76371"/>
        <dbReference type="ChEBI" id="CHEBI:15378"/>
        <dbReference type="ChEBI" id="CHEBI:155830"/>
    </reaction>
    <physiologicalReaction direction="left-to-right" evidence="1">
        <dbReference type="Rhea" id="RHEA:76372"/>
    </physiologicalReaction>
</comment>
<comment type="catalytic activity">
    <reaction evidence="1">
        <text>carnosine(out) + n H(+)(out) = carnosine(in) + n H(+)(in)</text>
        <dbReference type="Rhea" id="RHEA:76383"/>
        <dbReference type="ChEBI" id="CHEBI:15378"/>
        <dbReference type="ChEBI" id="CHEBI:57485"/>
    </reaction>
    <physiologicalReaction direction="left-to-right" evidence="1">
        <dbReference type="Rhea" id="RHEA:76384"/>
    </physiologicalReaction>
</comment>
<comment type="biophysicochemical properties">
    <kinetics>
        <KM evidence="5">17 uM for histidine (at pH 5.5)</KM>
    </kinetics>
</comment>
<comment type="subunit">
    <text evidence="1">Interacts with TASL; leading to TASL recruitment to endolysosome.</text>
</comment>
<comment type="subcellular location">
    <subcellularLocation>
        <location evidence="1">Lysosome membrane</location>
        <topology evidence="3">Multi-pass membrane protein</topology>
    </subcellularLocation>
    <subcellularLocation>
        <location evidence="1">Endosome membrane</location>
        <topology evidence="3">Multi-pass membrane protein</topology>
    </subcellularLocation>
    <subcellularLocation>
        <location evidence="2">Early endosome membrane</location>
        <topology evidence="3">Multi-pass membrane protein</topology>
    </subcellularLocation>
</comment>
<comment type="tissue specificity">
    <text evidence="4 5">Widely expressed in the gastrointestinal tract. Highly expressed in the brain and eye, and weakly in the lung and spleen. In brain highly expressed in the hippocampus, cerebellum and pontine nucleus, and weakly in other regions of the brain, including the cerebral cortex, brain stem, thalamus and hypothalamus.</text>
</comment>
<comment type="similarity">
    <text evidence="7">Belongs to the major facilitator superfamily. Proton-dependent oligopeptide transporter (POT/PTR) (TC 2.A.17) family.</text>
</comment>
<gene>
    <name evidence="9" type="primary">Slc15a4</name>
    <name evidence="6" type="synonym">Pht1</name>
</gene>
<evidence type="ECO:0000250" key="1">
    <source>
        <dbReference type="UniProtKB" id="Q8N697"/>
    </source>
</evidence>
<evidence type="ECO:0000250" key="2">
    <source>
        <dbReference type="UniProtKB" id="Q91W98"/>
    </source>
</evidence>
<evidence type="ECO:0000255" key="3"/>
<evidence type="ECO:0000269" key="4">
    <source>
    </source>
</evidence>
<evidence type="ECO:0000269" key="5">
    <source>
    </source>
</evidence>
<evidence type="ECO:0000303" key="6">
    <source>
    </source>
</evidence>
<evidence type="ECO:0000305" key="7"/>
<evidence type="ECO:0000305" key="8">
    <source>
    </source>
</evidence>
<evidence type="ECO:0000312" key="9">
    <source>
        <dbReference type="RGD" id="708469"/>
    </source>
</evidence>
<reference key="1">
    <citation type="journal article" date="1997" name="J. Biol. Chem.">
        <title>Cloning and functional expression of a brain peptide/histidine transporter.</title>
        <authorList>
            <person name="Yamashita T."/>
            <person name="Shimada S."/>
            <person name="Guo W."/>
            <person name="Sato K."/>
            <person name="Kohmura E."/>
            <person name="Hayakawa T."/>
            <person name="Takagi T."/>
            <person name="Tohyama M."/>
        </authorList>
    </citation>
    <scope>NUCLEOTIDE SEQUENCE [MRNA]</scope>
    <scope>FUNCTION</scope>
    <scope>TISSUE SPECIFICITY</scope>
    <scope>BIOPHYSICOCHEMICAL PROPERTIES</scope>
    <scope>TRANSPORTER ACTIVITY</scope>
    <source>
        <strain>Sprague-Dawley</strain>
        <tissue>Brain</tissue>
    </source>
</reference>
<reference key="2">
    <citation type="journal article" date="2004" name="Genome Res.">
        <title>The status, quality, and expansion of the NIH full-length cDNA project: the Mammalian Gene Collection (MGC).</title>
        <authorList>
            <consortium name="The MGC Project Team"/>
        </authorList>
    </citation>
    <scope>NUCLEOTIDE SEQUENCE [LARGE SCALE MRNA]</scope>
    <source>
        <tissue>Brain</tissue>
    </source>
</reference>
<reference key="3">
    <citation type="journal article" date="2001" name="AAPS PharmSci">
        <title>Spatial expression patterns of peptide transporters in the human and rat gastrointestinal tracts, Caco-2 in vitro cell culture model, and multiple human tissues.</title>
        <authorList>
            <person name="Herrera-Ruiz D."/>
            <person name="Wang Q."/>
            <person name="Gudmundsson O.S."/>
            <person name="Cook T.J."/>
            <person name="Smith R.L."/>
            <person name="Faria T.N."/>
            <person name="Knipp G.T."/>
        </authorList>
    </citation>
    <scope>TISSUE SPECIFICITY</scope>
</reference>
<accession>O09014</accession>
<accession>Q5M931</accession>
<keyword id="KW-0967">Endosome</keyword>
<keyword id="KW-0391">Immunity</keyword>
<keyword id="KW-0399">Innate immunity</keyword>
<keyword id="KW-0458">Lysosome</keyword>
<keyword id="KW-0472">Membrane</keyword>
<keyword id="KW-0571">Peptide transport</keyword>
<keyword id="KW-0597">Phosphoprotein</keyword>
<keyword id="KW-0653">Protein transport</keyword>
<keyword id="KW-1185">Reference proteome</keyword>
<keyword id="KW-0769">Symport</keyword>
<keyword id="KW-0812">Transmembrane</keyword>
<keyword id="KW-1133">Transmembrane helix</keyword>
<keyword id="KW-0813">Transport</keyword>